<evidence type="ECO:0000250" key="1"/>
<evidence type="ECO:0000255" key="2">
    <source>
        <dbReference type="PROSITE-ProRule" id="PRU00303"/>
    </source>
</evidence>
<evidence type="ECO:0000305" key="3"/>
<gene>
    <name type="primary">mltA</name>
    <name type="ordered locus">VC_2312</name>
</gene>
<keyword id="KW-0998">Cell outer membrane</keyword>
<keyword id="KW-0961">Cell wall biogenesis/degradation</keyword>
<keyword id="KW-0449">Lipoprotein</keyword>
<keyword id="KW-0456">Lyase</keyword>
<keyword id="KW-0472">Membrane</keyword>
<keyword id="KW-0564">Palmitate</keyword>
<keyword id="KW-1185">Reference proteome</keyword>
<keyword id="KW-0732">Signal</keyword>
<accession>Q9KPQ4</accession>
<organism>
    <name type="scientific">Vibrio cholerae serotype O1 (strain ATCC 39315 / El Tor Inaba N16961)</name>
    <dbReference type="NCBI Taxonomy" id="243277"/>
    <lineage>
        <taxon>Bacteria</taxon>
        <taxon>Pseudomonadati</taxon>
        <taxon>Pseudomonadota</taxon>
        <taxon>Gammaproteobacteria</taxon>
        <taxon>Vibrionales</taxon>
        <taxon>Vibrionaceae</taxon>
        <taxon>Vibrio</taxon>
    </lineage>
</organism>
<sequence>MSKRLLSLASLALLFGCAQQPNDRAQQYQQQTFPHILNRADVVESNKPRDYTEFSKQSELVVQGSASMAKIYRPLYEQLNEWVLQSGDPATLAQFGIQAAQLGGGDKQGNVLFTGYFSPVIELRHQPDSVFKYPVYGLPKCNKNCPTRAEIYQGALDGQGLELGYAENLIDPFIMEVQGSGFVHFGDDDTLEYFAYAGKNNKAYVSIGKVLIERGLVEREKMSLKAIKDWVLANDEATVRELLEENPSFVFFKPSAAAPVKGSAGIPLLPMASVAGDRSILPMGTPILAEVPLLNADGTWSGAHQLRLLIVLDTGGAVKQNHLDLYHGMGPRAGLEAGHYKHFGRVWKLGLENSPTQAPWALPPEKQQ</sequence>
<name>MLTA_VIBCH</name>
<feature type="signal peptide" evidence="3">
    <location>
        <begin position="1"/>
        <end position="16"/>
    </location>
</feature>
<feature type="chain" id="PRO_0000032783" description="Membrane-bound lytic murein transglycosylase A">
    <location>
        <begin position="17"/>
        <end position="368"/>
    </location>
</feature>
<feature type="lipid moiety-binding region" description="N-palmitoyl cysteine" evidence="3">
    <location>
        <position position="17"/>
    </location>
</feature>
<feature type="lipid moiety-binding region" description="S-diacylglycerol cysteine" evidence="3">
    <location>
        <position position="17"/>
    </location>
</feature>
<reference key="1">
    <citation type="journal article" date="2000" name="Nature">
        <title>DNA sequence of both chromosomes of the cholera pathogen Vibrio cholerae.</title>
        <authorList>
            <person name="Heidelberg J.F."/>
            <person name="Eisen J.A."/>
            <person name="Nelson W.C."/>
            <person name="Clayton R.A."/>
            <person name="Gwinn M.L."/>
            <person name="Dodson R.J."/>
            <person name="Haft D.H."/>
            <person name="Hickey E.K."/>
            <person name="Peterson J.D."/>
            <person name="Umayam L.A."/>
            <person name="Gill S.R."/>
            <person name="Nelson K.E."/>
            <person name="Read T.D."/>
            <person name="Tettelin H."/>
            <person name="Richardson D.L."/>
            <person name="Ermolaeva M.D."/>
            <person name="Vamathevan J.J."/>
            <person name="Bass S."/>
            <person name="Qin H."/>
            <person name="Dragoi I."/>
            <person name="Sellers P."/>
            <person name="McDonald L.A."/>
            <person name="Utterback T.R."/>
            <person name="Fleischmann R.D."/>
            <person name="Nierman W.C."/>
            <person name="White O."/>
            <person name="Salzberg S.L."/>
            <person name="Smith H.O."/>
            <person name="Colwell R.R."/>
            <person name="Mekalanos J.J."/>
            <person name="Venter J.C."/>
            <person name="Fraser C.M."/>
        </authorList>
    </citation>
    <scope>NUCLEOTIDE SEQUENCE [LARGE SCALE GENOMIC DNA]</scope>
    <source>
        <strain>ATCC 39315 / El Tor Inaba N16961</strain>
    </source>
</reference>
<protein>
    <recommendedName>
        <fullName>Membrane-bound lytic murein transglycosylase A</fullName>
        <ecNumber>4.2.2.n1</ecNumber>
    </recommendedName>
    <alternativeName>
        <fullName>Murein hydrolase A</fullName>
    </alternativeName>
</protein>
<comment type="function">
    <text evidence="1">Murein-degrading enzyme. May play a role in recycling of muropeptides during cell elongation and/or cell division. Degrades murein glycan strands and insoluble, high-molecular weight murein sacculi (By similarity).</text>
</comment>
<comment type="catalytic activity">
    <reaction>
        <text>Exolytic cleavage of the (1-&gt;4)-beta-glycosidic linkage between N-acetylmuramic acid (MurNAc) and N-acetylglucosamine (GlcNAc) residues in peptidoglycan, from either the reducing or the non-reducing ends of the peptidoglycan chains, with concomitant formation of a 1,6-anhydrobond in the MurNAc residue.</text>
        <dbReference type="EC" id="4.2.2.n1"/>
    </reaction>
</comment>
<comment type="subcellular location">
    <subcellularLocation>
        <location evidence="1">Cell outer membrane</location>
        <topology evidence="2">Lipid-anchor</topology>
    </subcellularLocation>
</comment>
<proteinExistence type="inferred from homology"/>
<dbReference type="EC" id="4.2.2.n1"/>
<dbReference type="EMBL" id="AE003852">
    <property type="protein sequence ID" value="AAF95456.1"/>
    <property type="molecule type" value="Genomic_DNA"/>
</dbReference>
<dbReference type="PIR" id="A82093">
    <property type="entry name" value="A82093"/>
</dbReference>
<dbReference type="RefSeq" id="NP_231943.1">
    <property type="nucleotide sequence ID" value="NC_002505.1"/>
</dbReference>
<dbReference type="RefSeq" id="WP_000044381.1">
    <property type="nucleotide sequence ID" value="NZ_LT906614.1"/>
</dbReference>
<dbReference type="SMR" id="Q9KPQ4"/>
<dbReference type="STRING" id="243277.VC_2312"/>
<dbReference type="CAZy" id="GH102">
    <property type="family name" value="Glycoside Hydrolase Family 102"/>
</dbReference>
<dbReference type="DNASU" id="2613108"/>
<dbReference type="EnsemblBacteria" id="AAF95456">
    <property type="protein sequence ID" value="AAF95456"/>
    <property type="gene ID" value="VC_2312"/>
</dbReference>
<dbReference type="KEGG" id="vch:VC_2312"/>
<dbReference type="PATRIC" id="fig|243277.26.peg.2204"/>
<dbReference type="eggNOG" id="COG2821">
    <property type="taxonomic scope" value="Bacteria"/>
</dbReference>
<dbReference type="HOGENOM" id="CLU_037751_2_0_6"/>
<dbReference type="Proteomes" id="UP000000584">
    <property type="component" value="Chromosome 1"/>
</dbReference>
<dbReference type="GO" id="GO:0009279">
    <property type="term" value="C:cell outer membrane"/>
    <property type="evidence" value="ECO:0007669"/>
    <property type="project" value="UniProtKB-SubCell"/>
</dbReference>
<dbReference type="GO" id="GO:0004553">
    <property type="term" value="F:hydrolase activity, hydrolyzing O-glycosyl compounds"/>
    <property type="evidence" value="ECO:0007669"/>
    <property type="project" value="InterPro"/>
</dbReference>
<dbReference type="GO" id="GO:0008933">
    <property type="term" value="F:peptidoglycan lytic transglycosylase activity"/>
    <property type="evidence" value="ECO:0000318"/>
    <property type="project" value="GO_Central"/>
</dbReference>
<dbReference type="GO" id="GO:0071555">
    <property type="term" value="P:cell wall organization"/>
    <property type="evidence" value="ECO:0007669"/>
    <property type="project" value="UniProtKB-KW"/>
</dbReference>
<dbReference type="GO" id="GO:0009253">
    <property type="term" value="P:peptidoglycan catabolic process"/>
    <property type="evidence" value="ECO:0000318"/>
    <property type="project" value="GO_Central"/>
</dbReference>
<dbReference type="GO" id="GO:0009254">
    <property type="term" value="P:peptidoglycan turnover"/>
    <property type="evidence" value="ECO:0007669"/>
    <property type="project" value="InterPro"/>
</dbReference>
<dbReference type="CDD" id="cd22785">
    <property type="entry name" value="DPBB_MltA-like"/>
    <property type="match status" value="1"/>
</dbReference>
<dbReference type="CDD" id="cd14668">
    <property type="entry name" value="mlta_B"/>
    <property type="match status" value="1"/>
</dbReference>
<dbReference type="Gene3D" id="2.40.240.50">
    <property type="entry name" value="Barwin-like endoglucanases"/>
    <property type="match status" value="1"/>
</dbReference>
<dbReference type="Gene3D" id="2.40.40.10">
    <property type="entry name" value="RlpA-like domain"/>
    <property type="match status" value="1"/>
</dbReference>
<dbReference type="InterPro" id="IPR010611">
    <property type="entry name" value="3D_dom"/>
</dbReference>
<dbReference type="InterPro" id="IPR026044">
    <property type="entry name" value="MltA"/>
</dbReference>
<dbReference type="InterPro" id="IPR005300">
    <property type="entry name" value="MltA_B"/>
</dbReference>
<dbReference type="InterPro" id="IPR036908">
    <property type="entry name" value="RlpA-like_sf"/>
</dbReference>
<dbReference type="NCBIfam" id="NF008366">
    <property type="entry name" value="PRK11162.1"/>
    <property type="match status" value="1"/>
</dbReference>
<dbReference type="PANTHER" id="PTHR30124">
    <property type="entry name" value="MEMBRANE-BOUND LYTIC MUREIN TRANSGLYCOSYLASE A"/>
    <property type="match status" value="1"/>
</dbReference>
<dbReference type="PANTHER" id="PTHR30124:SF0">
    <property type="entry name" value="MEMBRANE-BOUND LYTIC MUREIN TRANSGLYCOSYLASE A"/>
    <property type="match status" value="1"/>
</dbReference>
<dbReference type="Pfam" id="PF06725">
    <property type="entry name" value="3D"/>
    <property type="match status" value="1"/>
</dbReference>
<dbReference type="Pfam" id="PF03562">
    <property type="entry name" value="MltA"/>
    <property type="match status" value="1"/>
</dbReference>
<dbReference type="SMART" id="SM00925">
    <property type="entry name" value="MltA"/>
    <property type="match status" value="1"/>
</dbReference>
<dbReference type="SUPFAM" id="SSF50685">
    <property type="entry name" value="Barwin-like endoglucanases"/>
    <property type="match status" value="1"/>
</dbReference>
<dbReference type="PROSITE" id="PS51257">
    <property type="entry name" value="PROKAR_LIPOPROTEIN"/>
    <property type="match status" value="1"/>
</dbReference>